<protein>
    <recommendedName>
        <fullName evidence="1">Adenylosuccinate synthetase</fullName>
        <shortName evidence="1">AMPSase</shortName>
        <shortName evidence="1">AdSS</shortName>
        <ecNumber evidence="1">6.3.4.4</ecNumber>
    </recommendedName>
    <alternativeName>
        <fullName evidence="1">IMP--aspartate ligase</fullName>
    </alternativeName>
</protein>
<reference key="1">
    <citation type="journal article" date="2004" name="Nucleic Acids Res.">
        <title>The genome sequence of Bacillus cereus ATCC 10987 reveals metabolic adaptations and a large plasmid related to Bacillus anthracis pXO1.</title>
        <authorList>
            <person name="Rasko D.A."/>
            <person name="Ravel J."/>
            <person name="Oekstad O.A."/>
            <person name="Helgason E."/>
            <person name="Cer R.Z."/>
            <person name="Jiang L."/>
            <person name="Shores K.A."/>
            <person name="Fouts D.E."/>
            <person name="Tourasse N.J."/>
            <person name="Angiuoli S.V."/>
            <person name="Kolonay J.F."/>
            <person name="Nelson W.C."/>
            <person name="Kolstoe A.-B."/>
            <person name="Fraser C.M."/>
            <person name="Read T.D."/>
        </authorList>
    </citation>
    <scope>NUCLEOTIDE SEQUENCE [LARGE SCALE GENOMIC DNA]</scope>
    <source>
        <strain>ATCC 10987 / NRS 248</strain>
    </source>
</reference>
<accession>Q72WW1</accession>
<dbReference type="EC" id="6.3.4.4" evidence="1"/>
<dbReference type="EMBL" id="AE017194">
    <property type="protein sequence ID" value="AAS44517.1"/>
    <property type="molecule type" value="Genomic_DNA"/>
</dbReference>
<dbReference type="SMR" id="Q72WW1"/>
<dbReference type="KEGG" id="bca:BCE_5617"/>
<dbReference type="HOGENOM" id="CLU_029848_0_0_9"/>
<dbReference type="UniPathway" id="UPA00075">
    <property type="reaction ID" value="UER00335"/>
</dbReference>
<dbReference type="Proteomes" id="UP000002527">
    <property type="component" value="Chromosome"/>
</dbReference>
<dbReference type="GO" id="GO:0005737">
    <property type="term" value="C:cytoplasm"/>
    <property type="evidence" value="ECO:0007669"/>
    <property type="project" value="UniProtKB-SubCell"/>
</dbReference>
<dbReference type="GO" id="GO:0004019">
    <property type="term" value="F:adenylosuccinate synthase activity"/>
    <property type="evidence" value="ECO:0007669"/>
    <property type="project" value="UniProtKB-UniRule"/>
</dbReference>
<dbReference type="GO" id="GO:0005525">
    <property type="term" value="F:GTP binding"/>
    <property type="evidence" value="ECO:0007669"/>
    <property type="project" value="UniProtKB-UniRule"/>
</dbReference>
<dbReference type="GO" id="GO:0000287">
    <property type="term" value="F:magnesium ion binding"/>
    <property type="evidence" value="ECO:0007669"/>
    <property type="project" value="UniProtKB-UniRule"/>
</dbReference>
<dbReference type="GO" id="GO:0044208">
    <property type="term" value="P:'de novo' AMP biosynthetic process"/>
    <property type="evidence" value="ECO:0007669"/>
    <property type="project" value="UniProtKB-UniRule"/>
</dbReference>
<dbReference type="GO" id="GO:0046040">
    <property type="term" value="P:IMP metabolic process"/>
    <property type="evidence" value="ECO:0007669"/>
    <property type="project" value="TreeGrafter"/>
</dbReference>
<dbReference type="CDD" id="cd03108">
    <property type="entry name" value="AdSS"/>
    <property type="match status" value="1"/>
</dbReference>
<dbReference type="FunFam" id="1.10.300.10:FF:000001">
    <property type="entry name" value="Adenylosuccinate synthetase"/>
    <property type="match status" value="1"/>
</dbReference>
<dbReference type="FunFam" id="3.90.170.10:FF:000001">
    <property type="entry name" value="Adenylosuccinate synthetase"/>
    <property type="match status" value="1"/>
</dbReference>
<dbReference type="Gene3D" id="3.40.440.10">
    <property type="entry name" value="Adenylosuccinate Synthetase, subunit A, domain 1"/>
    <property type="match status" value="1"/>
</dbReference>
<dbReference type="Gene3D" id="1.10.300.10">
    <property type="entry name" value="Adenylosuccinate Synthetase, subunit A, domain 2"/>
    <property type="match status" value="1"/>
</dbReference>
<dbReference type="Gene3D" id="3.90.170.10">
    <property type="entry name" value="Adenylosuccinate Synthetase, subunit A, domain 3"/>
    <property type="match status" value="1"/>
</dbReference>
<dbReference type="HAMAP" id="MF_00011">
    <property type="entry name" value="Adenylosucc_synth"/>
    <property type="match status" value="1"/>
</dbReference>
<dbReference type="InterPro" id="IPR018220">
    <property type="entry name" value="Adenylosuccin_syn_GTP-bd"/>
</dbReference>
<dbReference type="InterPro" id="IPR033128">
    <property type="entry name" value="Adenylosuccin_syn_Lys_AS"/>
</dbReference>
<dbReference type="InterPro" id="IPR042109">
    <property type="entry name" value="Adenylosuccinate_synth_dom1"/>
</dbReference>
<dbReference type="InterPro" id="IPR042110">
    <property type="entry name" value="Adenylosuccinate_synth_dom2"/>
</dbReference>
<dbReference type="InterPro" id="IPR042111">
    <property type="entry name" value="Adenylosuccinate_synth_dom3"/>
</dbReference>
<dbReference type="InterPro" id="IPR001114">
    <property type="entry name" value="Adenylosuccinate_synthetase"/>
</dbReference>
<dbReference type="InterPro" id="IPR027417">
    <property type="entry name" value="P-loop_NTPase"/>
</dbReference>
<dbReference type="NCBIfam" id="NF002223">
    <property type="entry name" value="PRK01117.1"/>
    <property type="match status" value="1"/>
</dbReference>
<dbReference type="NCBIfam" id="TIGR00184">
    <property type="entry name" value="purA"/>
    <property type="match status" value="1"/>
</dbReference>
<dbReference type="PANTHER" id="PTHR11846">
    <property type="entry name" value="ADENYLOSUCCINATE SYNTHETASE"/>
    <property type="match status" value="1"/>
</dbReference>
<dbReference type="PANTHER" id="PTHR11846:SF0">
    <property type="entry name" value="ADENYLOSUCCINATE SYNTHETASE"/>
    <property type="match status" value="1"/>
</dbReference>
<dbReference type="Pfam" id="PF00709">
    <property type="entry name" value="Adenylsucc_synt"/>
    <property type="match status" value="1"/>
</dbReference>
<dbReference type="SMART" id="SM00788">
    <property type="entry name" value="Adenylsucc_synt"/>
    <property type="match status" value="1"/>
</dbReference>
<dbReference type="SUPFAM" id="SSF52540">
    <property type="entry name" value="P-loop containing nucleoside triphosphate hydrolases"/>
    <property type="match status" value="1"/>
</dbReference>
<dbReference type="PROSITE" id="PS01266">
    <property type="entry name" value="ADENYLOSUCCIN_SYN_1"/>
    <property type="match status" value="1"/>
</dbReference>
<dbReference type="PROSITE" id="PS00513">
    <property type="entry name" value="ADENYLOSUCCIN_SYN_2"/>
    <property type="match status" value="1"/>
</dbReference>
<feature type="chain" id="PRO_0000224250" description="Adenylosuccinate synthetase">
    <location>
        <begin position="1"/>
        <end position="429"/>
    </location>
</feature>
<feature type="active site" description="Proton acceptor" evidence="1">
    <location>
        <position position="13"/>
    </location>
</feature>
<feature type="active site" description="Proton donor" evidence="1">
    <location>
        <position position="41"/>
    </location>
</feature>
<feature type="binding site" evidence="1">
    <location>
        <begin position="12"/>
        <end position="18"/>
    </location>
    <ligand>
        <name>GTP</name>
        <dbReference type="ChEBI" id="CHEBI:37565"/>
    </ligand>
</feature>
<feature type="binding site" description="in other chain" evidence="1">
    <location>
        <begin position="13"/>
        <end position="16"/>
    </location>
    <ligand>
        <name>IMP</name>
        <dbReference type="ChEBI" id="CHEBI:58053"/>
        <note>ligand shared between dimeric partners</note>
    </ligand>
</feature>
<feature type="binding site" evidence="1">
    <location>
        <position position="13"/>
    </location>
    <ligand>
        <name>Mg(2+)</name>
        <dbReference type="ChEBI" id="CHEBI:18420"/>
    </ligand>
</feature>
<feature type="binding site" description="in other chain" evidence="1">
    <location>
        <begin position="38"/>
        <end position="41"/>
    </location>
    <ligand>
        <name>IMP</name>
        <dbReference type="ChEBI" id="CHEBI:58053"/>
        <note>ligand shared between dimeric partners</note>
    </ligand>
</feature>
<feature type="binding site" evidence="1">
    <location>
        <begin position="40"/>
        <end position="42"/>
    </location>
    <ligand>
        <name>GTP</name>
        <dbReference type="ChEBI" id="CHEBI:37565"/>
    </ligand>
</feature>
<feature type="binding site" evidence="1">
    <location>
        <position position="40"/>
    </location>
    <ligand>
        <name>Mg(2+)</name>
        <dbReference type="ChEBI" id="CHEBI:18420"/>
    </ligand>
</feature>
<feature type="binding site" description="in other chain" evidence="1">
    <location>
        <position position="128"/>
    </location>
    <ligand>
        <name>IMP</name>
        <dbReference type="ChEBI" id="CHEBI:58053"/>
        <note>ligand shared between dimeric partners</note>
    </ligand>
</feature>
<feature type="binding site" evidence="1">
    <location>
        <position position="142"/>
    </location>
    <ligand>
        <name>IMP</name>
        <dbReference type="ChEBI" id="CHEBI:58053"/>
        <note>ligand shared between dimeric partners</note>
    </ligand>
</feature>
<feature type="binding site" description="in other chain" evidence="1">
    <location>
        <position position="223"/>
    </location>
    <ligand>
        <name>IMP</name>
        <dbReference type="ChEBI" id="CHEBI:58053"/>
        <note>ligand shared between dimeric partners</note>
    </ligand>
</feature>
<feature type="binding site" description="in other chain" evidence="1">
    <location>
        <position position="238"/>
    </location>
    <ligand>
        <name>IMP</name>
        <dbReference type="ChEBI" id="CHEBI:58053"/>
        <note>ligand shared between dimeric partners</note>
    </ligand>
</feature>
<feature type="binding site" evidence="1">
    <location>
        <begin position="298"/>
        <end position="304"/>
    </location>
    <ligand>
        <name>substrate</name>
    </ligand>
</feature>
<feature type="binding site" description="in other chain" evidence="1">
    <location>
        <position position="302"/>
    </location>
    <ligand>
        <name>IMP</name>
        <dbReference type="ChEBI" id="CHEBI:58053"/>
        <note>ligand shared between dimeric partners</note>
    </ligand>
</feature>
<feature type="binding site" evidence="1">
    <location>
        <position position="304"/>
    </location>
    <ligand>
        <name>GTP</name>
        <dbReference type="ChEBI" id="CHEBI:37565"/>
    </ligand>
</feature>
<feature type="binding site" evidence="1">
    <location>
        <begin position="330"/>
        <end position="332"/>
    </location>
    <ligand>
        <name>GTP</name>
        <dbReference type="ChEBI" id="CHEBI:37565"/>
    </ligand>
</feature>
<feature type="binding site" evidence="1">
    <location>
        <begin position="412"/>
        <end position="414"/>
    </location>
    <ligand>
        <name>GTP</name>
        <dbReference type="ChEBI" id="CHEBI:37565"/>
    </ligand>
</feature>
<name>PURA_BACC1</name>
<organism>
    <name type="scientific">Bacillus cereus (strain ATCC 10987 / NRS 248)</name>
    <dbReference type="NCBI Taxonomy" id="222523"/>
    <lineage>
        <taxon>Bacteria</taxon>
        <taxon>Bacillati</taxon>
        <taxon>Bacillota</taxon>
        <taxon>Bacilli</taxon>
        <taxon>Bacillales</taxon>
        <taxon>Bacillaceae</taxon>
        <taxon>Bacillus</taxon>
        <taxon>Bacillus cereus group</taxon>
    </lineage>
</organism>
<sequence length="429" mass="47516">MSSVVVVGTQWGDEGKGKITDFLSEHAEVVARYQGGNNAGHTIVFGGVKYKLHLIPSGIFYKEKICVIGNGLVVDPKALLEELKYLHDRGVSTDNLRVSNRAHVILPYHLKQDELEEASKGDNKIGTTKKGIGPAYMDKAARIGIRMADLLDREAFKEKLERNLAQKNRLFEKMYDTEGFSVEEIFEEYFEYGQQIAQYVCDTSVVLNDALDNNHRVLFEGAQGVMLDIDHGTYPFVTSSNPIAGGVTVGTGVGPAKVTRVVGVCKAYTSRVGDGPFPTELHDEIGHQIREVGREYGTTTGRPRRVGWFDSVVVRHARRVSGLTDLSLNSIDVLTGISTLKICVAYKYNGEVIDEVPANLNILAKCEPVYEELPGWTEDITGVRSLDELPENARKYVERVSELTGIQLSMFSVGPDRNQTNIVRNVYEA</sequence>
<comment type="function">
    <text evidence="1">Plays an important role in the de novo pathway of purine nucleotide biosynthesis. Catalyzes the first committed step in the biosynthesis of AMP from IMP.</text>
</comment>
<comment type="catalytic activity">
    <reaction evidence="1">
        <text>IMP + L-aspartate + GTP = N(6)-(1,2-dicarboxyethyl)-AMP + GDP + phosphate + 2 H(+)</text>
        <dbReference type="Rhea" id="RHEA:15753"/>
        <dbReference type="ChEBI" id="CHEBI:15378"/>
        <dbReference type="ChEBI" id="CHEBI:29991"/>
        <dbReference type="ChEBI" id="CHEBI:37565"/>
        <dbReference type="ChEBI" id="CHEBI:43474"/>
        <dbReference type="ChEBI" id="CHEBI:57567"/>
        <dbReference type="ChEBI" id="CHEBI:58053"/>
        <dbReference type="ChEBI" id="CHEBI:58189"/>
        <dbReference type="EC" id="6.3.4.4"/>
    </reaction>
</comment>
<comment type="cofactor">
    <cofactor evidence="1">
        <name>Mg(2+)</name>
        <dbReference type="ChEBI" id="CHEBI:18420"/>
    </cofactor>
    <text evidence="1">Binds 1 Mg(2+) ion per subunit.</text>
</comment>
<comment type="pathway">
    <text evidence="1">Purine metabolism; AMP biosynthesis via de novo pathway; AMP from IMP: step 1/2.</text>
</comment>
<comment type="subunit">
    <text evidence="1">Homodimer.</text>
</comment>
<comment type="subcellular location">
    <subcellularLocation>
        <location evidence="1">Cytoplasm</location>
    </subcellularLocation>
</comment>
<comment type="similarity">
    <text evidence="1">Belongs to the adenylosuccinate synthetase family.</text>
</comment>
<gene>
    <name evidence="1" type="primary">purA</name>
    <name type="ordered locus">BCE_5617</name>
</gene>
<keyword id="KW-0963">Cytoplasm</keyword>
<keyword id="KW-0342">GTP-binding</keyword>
<keyword id="KW-0436">Ligase</keyword>
<keyword id="KW-0460">Magnesium</keyword>
<keyword id="KW-0479">Metal-binding</keyword>
<keyword id="KW-0547">Nucleotide-binding</keyword>
<keyword id="KW-0658">Purine biosynthesis</keyword>
<proteinExistence type="inferred from homology"/>
<evidence type="ECO:0000255" key="1">
    <source>
        <dbReference type="HAMAP-Rule" id="MF_00011"/>
    </source>
</evidence>